<comment type="function">
    <text evidence="1">Phosphorylation of dTMP to form dTDP in both de novo and salvage pathways of dTTP synthesis.</text>
</comment>
<comment type="catalytic activity">
    <reaction evidence="1">
        <text>dTMP + ATP = dTDP + ADP</text>
        <dbReference type="Rhea" id="RHEA:13517"/>
        <dbReference type="ChEBI" id="CHEBI:30616"/>
        <dbReference type="ChEBI" id="CHEBI:58369"/>
        <dbReference type="ChEBI" id="CHEBI:63528"/>
        <dbReference type="ChEBI" id="CHEBI:456216"/>
        <dbReference type="EC" id="2.7.4.9"/>
    </reaction>
</comment>
<comment type="similarity">
    <text evidence="1">Belongs to the thymidylate kinase family.</text>
</comment>
<feature type="chain" id="PRO_1000123555" description="Thymidylate kinase">
    <location>
        <begin position="1"/>
        <end position="208"/>
    </location>
</feature>
<feature type="binding site" evidence="1">
    <location>
        <begin position="10"/>
        <end position="17"/>
    </location>
    <ligand>
        <name>ATP</name>
        <dbReference type="ChEBI" id="CHEBI:30616"/>
    </ligand>
</feature>
<reference key="1">
    <citation type="submission" date="2009-04" db="EMBL/GenBank/DDBJ databases">
        <title>Genome sequence of Bacillus anthracis A0248.</title>
        <authorList>
            <person name="Dodson R.J."/>
            <person name="Munk A.C."/>
            <person name="Bruce D."/>
            <person name="Detter C."/>
            <person name="Tapia R."/>
            <person name="Sutton G."/>
            <person name="Sims D."/>
            <person name="Brettin T."/>
        </authorList>
    </citation>
    <scope>NUCLEOTIDE SEQUENCE [LARGE SCALE GENOMIC DNA]</scope>
    <source>
        <strain>A0248</strain>
    </source>
</reference>
<protein>
    <recommendedName>
        <fullName evidence="1">Thymidylate kinase</fullName>
        <ecNumber evidence="1">2.7.4.9</ecNumber>
    </recommendedName>
    <alternativeName>
        <fullName evidence="1">dTMP kinase</fullName>
    </alternativeName>
</protein>
<sequence>MKGLFVTIEGPEGSGKTTLIQSLLPYFEQKEQKVMATREPGGIAISEDIRTILHKQEYTMMEARTEALLYAAARRQHLVEKVMPALNEDYLVLCDRFIDSSLAYQGYARGLGMDKVFEINRFATEDCMPSLTIYLDIEPEVGLARIAKDAGREVNRLDMEDISFHKRVREGYLQVVERFSDRIVLVNADQPMEKLIEEVIQVIEDKLL</sequence>
<gene>
    <name evidence="1" type="primary">tmk</name>
    <name type="ordered locus">BAA_0039</name>
</gene>
<accession>C3P9H5</accession>
<dbReference type="EC" id="2.7.4.9" evidence="1"/>
<dbReference type="EMBL" id="CP001598">
    <property type="protein sequence ID" value="ACQ49056.1"/>
    <property type="molecule type" value="Genomic_DNA"/>
</dbReference>
<dbReference type="RefSeq" id="WP_000677237.1">
    <property type="nucleotide sequence ID" value="NC_012659.1"/>
</dbReference>
<dbReference type="SMR" id="C3P9H5"/>
<dbReference type="GeneID" id="45020070"/>
<dbReference type="KEGG" id="bai:BAA_0039"/>
<dbReference type="HOGENOM" id="CLU_049131_0_2_9"/>
<dbReference type="GO" id="GO:0005829">
    <property type="term" value="C:cytosol"/>
    <property type="evidence" value="ECO:0007669"/>
    <property type="project" value="TreeGrafter"/>
</dbReference>
<dbReference type="GO" id="GO:0005524">
    <property type="term" value="F:ATP binding"/>
    <property type="evidence" value="ECO:0007669"/>
    <property type="project" value="UniProtKB-UniRule"/>
</dbReference>
<dbReference type="GO" id="GO:0004798">
    <property type="term" value="F:dTMP kinase activity"/>
    <property type="evidence" value="ECO:0007669"/>
    <property type="project" value="UniProtKB-UniRule"/>
</dbReference>
<dbReference type="GO" id="GO:0006233">
    <property type="term" value="P:dTDP biosynthetic process"/>
    <property type="evidence" value="ECO:0007669"/>
    <property type="project" value="InterPro"/>
</dbReference>
<dbReference type="GO" id="GO:0006235">
    <property type="term" value="P:dTTP biosynthetic process"/>
    <property type="evidence" value="ECO:0007669"/>
    <property type="project" value="UniProtKB-UniRule"/>
</dbReference>
<dbReference type="GO" id="GO:0006227">
    <property type="term" value="P:dUDP biosynthetic process"/>
    <property type="evidence" value="ECO:0007669"/>
    <property type="project" value="TreeGrafter"/>
</dbReference>
<dbReference type="CDD" id="cd01672">
    <property type="entry name" value="TMPK"/>
    <property type="match status" value="1"/>
</dbReference>
<dbReference type="FunFam" id="3.40.50.300:FF:000225">
    <property type="entry name" value="Thymidylate kinase"/>
    <property type="match status" value="1"/>
</dbReference>
<dbReference type="Gene3D" id="3.40.50.300">
    <property type="entry name" value="P-loop containing nucleotide triphosphate hydrolases"/>
    <property type="match status" value="1"/>
</dbReference>
<dbReference type="HAMAP" id="MF_00165">
    <property type="entry name" value="Thymidylate_kinase"/>
    <property type="match status" value="1"/>
</dbReference>
<dbReference type="InterPro" id="IPR027417">
    <property type="entry name" value="P-loop_NTPase"/>
</dbReference>
<dbReference type="InterPro" id="IPR039430">
    <property type="entry name" value="Thymidylate_kin-like_dom"/>
</dbReference>
<dbReference type="InterPro" id="IPR018095">
    <property type="entry name" value="Thymidylate_kin_CS"/>
</dbReference>
<dbReference type="InterPro" id="IPR018094">
    <property type="entry name" value="Thymidylate_kinase"/>
</dbReference>
<dbReference type="NCBIfam" id="TIGR00041">
    <property type="entry name" value="DTMP_kinase"/>
    <property type="match status" value="1"/>
</dbReference>
<dbReference type="PANTHER" id="PTHR10344">
    <property type="entry name" value="THYMIDYLATE KINASE"/>
    <property type="match status" value="1"/>
</dbReference>
<dbReference type="PANTHER" id="PTHR10344:SF4">
    <property type="entry name" value="UMP-CMP KINASE 2, MITOCHONDRIAL"/>
    <property type="match status" value="1"/>
</dbReference>
<dbReference type="Pfam" id="PF02223">
    <property type="entry name" value="Thymidylate_kin"/>
    <property type="match status" value="1"/>
</dbReference>
<dbReference type="SUPFAM" id="SSF52540">
    <property type="entry name" value="P-loop containing nucleoside triphosphate hydrolases"/>
    <property type="match status" value="1"/>
</dbReference>
<dbReference type="PROSITE" id="PS01331">
    <property type="entry name" value="THYMIDYLATE_KINASE"/>
    <property type="match status" value="1"/>
</dbReference>
<keyword id="KW-0067">ATP-binding</keyword>
<keyword id="KW-0418">Kinase</keyword>
<keyword id="KW-0545">Nucleotide biosynthesis</keyword>
<keyword id="KW-0547">Nucleotide-binding</keyword>
<keyword id="KW-0808">Transferase</keyword>
<proteinExistence type="inferred from homology"/>
<evidence type="ECO:0000255" key="1">
    <source>
        <dbReference type="HAMAP-Rule" id="MF_00165"/>
    </source>
</evidence>
<organism>
    <name type="scientific">Bacillus anthracis (strain A0248)</name>
    <dbReference type="NCBI Taxonomy" id="592021"/>
    <lineage>
        <taxon>Bacteria</taxon>
        <taxon>Bacillati</taxon>
        <taxon>Bacillota</taxon>
        <taxon>Bacilli</taxon>
        <taxon>Bacillales</taxon>
        <taxon>Bacillaceae</taxon>
        <taxon>Bacillus</taxon>
        <taxon>Bacillus cereus group</taxon>
    </lineage>
</organism>
<name>KTHY_BACAA</name>